<reference key="1">
    <citation type="journal article" date="2003" name="Science">
        <title>In-depth view of structure, activity, and evolution of rice chromosome 10.</title>
        <authorList>
            <person name="Yu Y."/>
            <person name="Rambo T."/>
            <person name="Currie J."/>
            <person name="Saski C."/>
            <person name="Kim H.-R."/>
            <person name="Collura K."/>
            <person name="Thompson S."/>
            <person name="Simmons J."/>
            <person name="Yang T.-J."/>
            <person name="Nah G."/>
            <person name="Patel A.J."/>
            <person name="Thurmond S."/>
            <person name="Henry D."/>
            <person name="Oates R."/>
            <person name="Palmer M."/>
            <person name="Pries G."/>
            <person name="Gibson J."/>
            <person name="Anderson H."/>
            <person name="Paradkar M."/>
            <person name="Crane L."/>
            <person name="Dale J."/>
            <person name="Carver M.B."/>
            <person name="Wood T."/>
            <person name="Frisch D."/>
            <person name="Engler F."/>
            <person name="Soderlund C."/>
            <person name="Palmer L.E."/>
            <person name="Teytelman L."/>
            <person name="Nascimento L."/>
            <person name="De la Bastide M."/>
            <person name="Spiegel L."/>
            <person name="Ware D."/>
            <person name="O'Shaughnessy A."/>
            <person name="Dike S."/>
            <person name="Dedhia N."/>
            <person name="Preston R."/>
            <person name="Huang E."/>
            <person name="Ferraro K."/>
            <person name="Kuit K."/>
            <person name="Miller B."/>
            <person name="Zutavern T."/>
            <person name="Katzenberger F."/>
            <person name="Muller S."/>
            <person name="Balija V."/>
            <person name="Martienssen R.A."/>
            <person name="Stein L."/>
            <person name="Minx P."/>
            <person name="Johnson D."/>
            <person name="Cordum H."/>
            <person name="Mardis E."/>
            <person name="Cheng Z."/>
            <person name="Jiang J."/>
            <person name="Wilson R."/>
            <person name="McCombie W.R."/>
            <person name="Wing R.A."/>
            <person name="Yuan Q."/>
            <person name="Ouyang S."/>
            <person name="Liu J."/>
            <person name="Jones K.M."/>
            <person name="Gansberger K."/>
            <person name="Moffat K."/>
            <person name="Hill J."/>
            <person name="Tsitrin T."/>
            <person name="Overton L."/>
            <person name="Bera J."/>
            <person name="Kim M."/>
            <person name="Jin S."/>
            <person name="Tallon L."/>
            <person name="Ciecko A."/>
            <person name="Pai G."/>
            <person name="Van Aken S."/>
            <person name="Utterback T."/>
            <person name="Reidmuller S."/>
            <person name="Bormann J."/>
            <person name="Feldblyum T."/>
            <person name="Hsiao J."/>
            <person name="Zismann V."/>
            <person name="Blunt S."/>
            <person name="de Vazeille A.R."/>
            <person name="Shaffer T."/>
            <person name="Koo H."/>
            <person name="Suh B."/>
            <person name="Yang Q."/>
            <person name="Haas B."/>
            <person name="Peterson J."/>
            <person name="Pertea M."/>
            <person name="Volfovsky N."/>
            <person name="Wortman J."/>
            <person name="White O."/>
            <person name="Salzberg S.L."/>
            <person name="Fraser C.M."/>
            <person name="Buell C.R."/>
            <person name="Messing J."/>
            <person name="Song R."/>
            <person name="Fuks G."/>
            <person name="Llaca V."/>
            <person name="Kovchak S."/>
            <person name="Young S."/>
            <person name="Bowers J.E."/>
            <person name="Paterson A.H."/>
            <person name="Johns M.A."/>
            <person name="Mao L."/>
            <person name="Pan H."/>
            <person name="Dean R.A."/>
        </authorList>
    </citation>
    <scope>NUCLEOTIDE SEQUENCE [LARGE SCALE GENOMIC DNA]</scope>
    <source>
        <strain>cv. Nipponbare</strain>
    </source>
</reference>
<reference key="2">
    <citation type="journal article" date="2005" name="Nature">
        <title>The map-based sequence of the rice genome.</title>
        <authorList>
            <consortium name="International rice genome sequencing project (IRGSP)"/>
        </authorList>
    </citation>
    <scope>NUCLEOTIDE SEQUENCE [LARGE SCALE GENOMIC DNA]</scope>
    <source>
        <strain>cv. Nipponbare</strain>
    </source>
</reference>
<reference key="3">
    <citation type="journal article" date="2008" name="Nucleic Acids Res.">
        <title>The rice annotation project database (RAP-DB): 2008 update.</title>
        <authorList>
            <consortium name="The rice annotation project (RAP)"/>
        </authorList>
    </citation>
    <scope>GENOME REANNOTATION</scope>
    <source>
        <strain>cv. Nipponbare</strain>
    </source>
</reference>
<reference key="4">
    <citation type="journal article" date="2013" name="Rice">
        <title>Improvement of the Oryza sativa Nipponbare reference genome using next generation sequence and optical map data.</title>
        <authorList>
            <person name="Kawahara Y."/>
            <person name="de la Bastide M."/>
            <person name="Hamilton J.P."/>
            <person name="Kanamori H."/>
            <person name="McCombie W.R."/>
            <person name="Ouyang S."/>
            <person name="Schwartz D.C."/>
            <person name="Tanaka T."/>
            <person name="Wu J."/>
            <person name="Zhou S."/>
            <person name="Childs K.L."/>
            <person name="Davidson R.M."/>
            <person name="Lin H."/>
            <person name="Quesada-Ocampo L."/>
            <person name="Vaillancourt B."/>
            <person name="Sakai H."/>
            <person name="Lee S.S."/>
            <person name="Kim J."/>
            <person name="Numa H."/>
            <person name="Itoh T."/>
            <person name="Buell C.R."/>
            <person name="Matsumoto T."/>
        </authorList>
    </citation>
    <scope>GENOME REANNOTATION</scope>
    <source>
        <strain>cv. Nipponbare</strain>
    </source>
</reference>
<reference key="5">
    <citation type="journal article" date="2005" name="PLoS Biol.">
        <title>The genomes of Oryza sativa: a history of duplications.</title>
        <authorList>
            <person name="Yu J."/>
            <person name="Wang J."/>
            <person name="Lin W."/>
            <person name="Li S."/>
            <person name="Li H."/>
            <person name="Zhou J."/>
            <person name="Ni P."/>
            <person name="Dong W."/>
            <person name="Hu S."/>
            <person name="Zeng C."/>
            <person name="Zhang J."/>
            <person name="Zhang Y."/>
            <person name="Li R."/>
            <person name="Xu Z."/>
            <person name="Li S."/>
            <person name="Li X."/>
            <person name="Zheng H."/>
            <person name="Cong L."/>
            <person name="Lin L."/>
            <person name="Yin J."/>
            <person name="Geng J."/>
            <person name="Li G."/>
            <person name="Shi J."/>
            <person name="Liu J."/>
            <person name="Lv H."/>
            <person name="Li J."/>
            <person name="Wang J."/>
            <person name="Deng Y."/>
            <person name="Ran L."/>
            <person name="Shi X."/>
            <person name="Wang X."/>
            <person name="Wu Q."/>
            <person name="Li C."/>
            <person name="Ren X."/>
            <person name="Wang J."/>
            <person name="Wang X."/>
            <person name="Li D."/>
            <person name="Liu D."/>
            <person name="Zhang X."/>
            <person name="Ji Z."/>
            <person name="Zhao W."/>
            <person name="Sun Y."/>
            <person name="Zhang Z."/>
            <person name="Bao J."/>
            <person name="Han Y."/>
            <person name="Dong L."/>
            <person name="Ji J."/>
            <person name="Chen P."/>
            <person name="Wu S."/>
            <person name="Liu J."/>
            <person name="Xiao Y."/>
            <person name="Bu D."/>
            <person name="Tan J."/>
            <person name="Yang L."/>
            <person name="Ye C."/>
            <person name="Zhang J."/>
            <person name="Xu J."/>
            <person name="Zhou Y."/>
            <person name="Yu Y."/>
            <person name="Zhang B."/>
            <person name="Zhuang S."/>
            <person name="Wei H."/>
            <person name="Liu B."/>
            <person name="Lei M."/>
            <person name="Yu H."/>
            <person name="Li Y."/>
            <person name="Xu H."/>
            <person name="Wei S."/>
            <person name="He X."/>
            <person name="Fang L."/>
            <person name="Zhang Z."/>
            <person name="Zhang Y."/>
            <person name="Huang X."/>
            <person name="Su Z."/>
            <person name="Tong W."/>
            <person name="Li J."/>
            <person name="Tong Z."/>
            <person name="Li S."/>
            <person name="Ye J."/>
            <person name="Wang L."/>
            <person name="Fang L."/>
            <person name="Lei T."/>
            <person name="Chen C.-S."/>
            <person name="Chen H.-C."/>
            <person name="Xu Z."/>
            <person name="Li H."/>
            <person name="Huang H."/>
            <person name="Zhang F."/>
            <person name="Xu H."/>
            <person name="Li N."/>
            <person name="Zhao C."/>
            <person name="Li S."/>
            <person name="Dong L."/>
            <person name="Huang Y."/>
            <person name="Li L."/>
            <person name="Xi Y."/>
            <person name="Qi Q."/>
            <person name="Li W."/>
            <person name="Zhang B."/>
            <person name="Hu W."/>
            <person name="Zhang Y."/>
            <person name="Tian X."/>
            <person name="Jiao Y."/>
            <person name="Liang X."/>
            <person name="Jin J."/>
            <person name="Gao L."/>
            <person name="Zheng W."/>
            <person name="Hao B."/>
            <person name="Liu S.-M."/>
            <person name="Wang W."/>
            <person name="Yuan L."/>
            <person name="Cao M."/>
            <person name="McDermott J."/>
            <person name="Samudrala R."/>
            <person name="Wang J."/>
            <person name="Wong G.K.-S."/>
            <person name="Yang H."/>
        </authorList>
    </citation>
    <scope>NUCLEOTIDE SEQUENCE [LARGE SCALE GENOMIC DNA]</scope>
    <source>
        <strain>cv. Nipponbare</strain>
    </source>
</reference>
<reference key="6">
    <citation type="journal article" date="2003" name="Science">
        <title>Collection, mapping, and annotation of over 28,000 cDNA clones from japonica rice.</title>
        <authorList>
            <consortium name="The rice full-length cDNA consortium"/>
        </authorList>
    </citation>
    <scope>NUCLEOTIDE SEQUENCE [LARGE SCALE MRNA]</scope>
    <source>
        <strain>cv. Nipponbare</strain>
    </source>
</reference>
<reference key="7">
    <citation type="journal article" date="2003" name="J. Plant Res.">
        <title>Structure and function of cytokinin oxidase/dehydrogenase genes of maize, rice, Arabidopsis and other species.</title>
        <authorList>
            <person name="Schmuelling T."/>
            <person name="Werner T."/>
            <person name="Riefler M."/>
            <person name="Krupkova E."/>
            <person name="Bartrina y Manns I."/>
        </authorList>
    </citation>
    <scope>REVIEW</scope>
</reference>
<reference key="8">
    <citation type="journal article" date="2005" name="Science">
        <title>Cytokinin oxidase regulates rice grain production.</title>
        <authorList>
            <person name="Ashikari M."/>
            <person name="Sakakibara H."/>
            <person name="Lin S."/>
            <person name="Yamamoto T."/>
            <person name="Takashi T."/>
            <person name="Nishimura A."/>
            <person name="Angeles E.R."/>
            <person name="Qian Q."/>
            <person name="Kitano H."/>
            <person name="Matsuoka M."/>
        </authorList>
    </citation>
    <scope>TISSUE SPECIFICITY</scope>
    <scope>GENE FAMILY</scope>
    <scope>NOMENCLATURE</scope>
    <source>
        <strain>cv. Koshihikari</strain>
    </source>
</reference>
<reference key="9">
    <citation type="journal article" date="2022" name="Plant Physiol.">
        <title>Cytokinins regulate rice lamina joint development and leaf angle.</title>
        <authorList>
            <person name="Huang P."/>
            <person name="Zhao J."/>
            <person name="Hong J."/>
            <person name="Zhu B."/>
            <person name="Xia S."/>
            <person name="Engao Z."/>
            <person name="Han P."/>
            <person name="Zhang K."/>
        </authorList>
    </citation>
    <scope>FUNCTION</scope>
    <scope>CATALYTIC ACTIVITY</scope>
    <scope>COFACTOR</scope>
    <scope>BIOPHYSICOCHEMICAL PROPERTIES</scope>
    <scope>TISSUE SPECIFICITY</scope>
    <scope>INDUCTION</scope>
    <scope>DISRUPTION PHENOTYPE</scope>
</reference>
<keyword id="KW-0256">Endoplasmic reticulum</keyword>
<keyword id="KW-0274">FAD</keyword>
<keyword id="KW-0285">Flavoprotein</keyword>
<keyword id="KW-0325">Glycoprotein</keyword>
<keyword id="KW-0560">Oxidoreductase</keyword>
<keyword id="KW-1185">Reference proteome</keyword>
<keyword id="KW-0732">Signal</keyword>
<protein>
    <recommendedName>
        <fullName evidence="9">Cytokinin dehydrogenase 3</fullName>
        <ecNumber evidence="8">1.5.99.12</ecNumber>
    </recommendedName>
    <alternativeName>
        <fullName evidence="9">Cytokinin oxidase 3</fullName>
        <shortName evidence="9">OsCKX3</shortName>
    </alternativeName>
</protein>
<proteinExistence type="evidence at protein level"/>
<name>CKX3_ORYSJ</name>
<accession>Q8LNV6</accession>
<accession>A0A0P0XVJ7</accession>
<accession>A3CF07</accession>
<sequence>MEVAMVCTRVNLLILILSLCSPYKFIQSPMDFGPLNLLPTTTTASSDFGRILFHSPSAVLKPQAPRDISLLLSFLSASPLGKVTVAARGAGHSIHGQAQALDGIVVEMSSLPSEIEFYRRGEGDVSYADVGGGIMWIELLEQSLKLGLAPRSWTDYLYLTIGGTLSNAGISGQTFKHGPQISNVLQLEVVTGRGEIVTCSPTKDAELFNAVLGGLGQFGIITRARILLQEAPQKVKWVRAFYDDFATFTKDQELLVSMPVLVDYVEGFIVLNEQSLHSSSIAFPTNVDFNPDFGTKNNPKIYYCIEFAVHDYQNKNINVEQVVEVISRQMSHIASHLYSVEVSYFDFLNRVRMEEMSLRNSGLWEVHHPWLNMFVPSAGISDFRDLLMDSISPDNFEGLILIYPLLRHKWDTNTSVVLPDSGSTDQVMYAVGILRSANPDDGCSHHCLQELLLRHRRLAGAAASGLGAKQYLAHHPTPAGWRRHFGRRWERFADRKARFDPRCILGPGQGIFPRDSSSSNGAFASYS</sequence>
<comment type="function">
    <text evidence="8 11">Catalyzes the oxidation of cytokinins, a family of N(6)-substituted adenine derivatives, where the substituent is an isopentenyl group (Probable). Cytokinins are plant hormones essential for plant growth, development, and stress responses (Probable). Exhibits specific activities toward trans-zeatin (tZ) and isopentenyladenine (iP) (PubMed:36031806). Plays a role in lamina joint inclination (PubMed:36031806). Regulates cell proliferation and vascular bundle number on the abaxial side of lamina joint (PubMed:36031806).</text>
</comment>
<comment type="catalytic activity">
    <reaction evidence="8">
        <text>N(6)-dimethylallyladenine + A + H2O = 3-methyl-2-butenal + adenine + AH2</text>
        <dbReference type="Rhea" id="RHEA:13625"/>
        <dbReference type="ChEBI" id="CHEBI:13193"/>
        <dbReference type="ChEBI" id="CHEBI:15377"/>
        <dbReference type="ChEBI" id="CHEBI:15825"/>
        <dbReference type="ChEBI" id="CHEBI:16708"/>
        <dbReference type="ChEBI" id="CHEBI:17499"/>
        <dbReference type="ChEBI" id="CHEBI:17660"/>
        <dbReference type="EC" id="1.5.99.12"/>
    </reaction>
</comment>
<comment type="cofactor">
    <cofactor evidence="8">
        <name>FAD</name>
        <dbReference type="ChEBI" id="CHEBI:57692"/>
    </cofactor>
</comment>
<comment type="biophysicochemical properties">
    <kinetics>
        <KM evidence="8">1.74 uM for trans-zeatin</KM>
        <KM evidence="8">2.61 uM for isopentenyladenine</KM>
        <Vmax evidence="8">2.6 nmol/min/mg enzyme with trans-zeatin as substrate</Vmax>
        <Vmax evidence="8">0.54 nmol/min/mg enzyme with isopentenyladenine as substrate</Vmax>
    </kinetics>
</comment>
<comment type="subunit">
    <text evidence="1">Monomer.</text>
</comment>
<comment type="subcellular location">
    <subcellularLocation>
        <location evidence="8">Endoplasmic reticulum</location>
    </subcellularLocation>
</comment>
<comment type="tissue specificity">
    <text evidence="7 8">Expressed in inflorescence meristems (PubMed:15976269). Highly expressed in lamina joints, and mainly in the parenchyma cells and vascular bundles on the abaxial side of the lamina joint (PubMed:36031806). Expressed in roots, stems, leaves and young panicles (PubMed:36031806).</text>
</comment>
<comment type="induction">
    <text evidence="8">Induced by isopentenyladenine, trans-zeatin and 24-epibrassinolide.</text>
</comment>
<comment type="disruption phenotype">
    <text evidence="8">Increased leaf erectness, asymmetric growth and development of lamina joint.</text>
</comment>
<comment type="miscellaneous">
    <text evidence="8">Plants over-expressing CKX3 exhibit decreased leaf erectness.</text>
</comment>
<comment type="similarity">
    <text evidence="10">Belongs to the oxygen-dependent FAD-linked oxidoreductase family.</text>
</comment>
<dbReference type="EC" id="1.5.99.12" evidence="8"/>
<dbReference type="EMBL" id="AC051632">
    <property type="protein sequence ID" value="AAM91887.1"/>
    <property type="molecule type" value="Genomic_DNA"/>
</dbReference>
<dbReference type="EMBL" id="DP000086">
    <property type="protein sequence ID" value="AAP54326.1"/>
    <property type="molecule type" value="Genomic_DNA"/>
</dbReference>
<dbReference type="EMBL" id="AP008216">
    <property type="protein sequence ID" value="BAF26800.1"/>
    <property type="molecule type" value="Genomic_DNA"/>
</dbReference>
<dbReference type="EMBL" id="AP014966">
    <property type="protein sequence ID" value="BAT11359.1"/>
    <property type="molecule type" value="Genomic_DNA"/>
</dbReference>
<dbReference type="EMBL" id="CM000147">
    <property type="protein sequence ID" value="EAZ16460.1"/>
    <property type="molecule type" value="Genomic_DNA"/>
</dbReference>
<dbReference type="EMBL" id="CM000149">
    <property type="protein sequence ID" value="EAZ19670.1"/>
    <property type="molecule type" value="Genomic_DNA"/>
</dbReference>
<dbReference type="EMBL" id="AK103272">
    <property type="protein sequence ID" value="BAG95988.1"/>
    <property type="molecule type" value="mRNA"/>
</dbReference>
<dbReference type="RefSeq" id="XP_015613042.1">
    <property type="nucleotide sequence ID" value="XM_015757556.1"/>
</dbReference>
<dbReference type="RefSeq" id="XP_015613043.1">
    <property type="nucleotide sequence ID" value="XM_015757557.1"/>
</dbReference>
<dbReference type="RefSeq" id="XP_015613045.1">
    <property type="nucleotide sequence ID" value="XM_015757559.1"/>
</dbReference>
<dbReference type="RefSeq" id="XP_015613046.1">
    <property type="nucleotide sequence ID" value="XM_015757560.1"/>
</dbReference>
<dbReference type="SMR" id="Q8LNV6"/>
<dbReference type="FunCoup" id="Q8LNV6">
    <property type="interactions" value="23"/>
</dbReference>
<dbReference type="STRING" id="39947.Q8LNV6"/>
<dbReference type="GlyCosmos" id="Q8LNV6">
    <property type="glycosylation" value="1 site, No reported glycans"/>
</dbReference>
<dbReference type="PaxDb" id="39947-Q8LNV6"/>
<dbReference type="EnsemblPlants" id="Os10t0483500-01">
    <property type="protein sequence ID" value="Os10t0483500-01"/>
    <property type="gene ID" value="Os10g0483500"/>
</dbReference>
<dbReference type="Gramene" id="Os10t0483500-01">
    <property type="protein sequence ID" value="Os10t0483500-01"/>
    <property type="gene ID" value="Os10g0483500"/>
</dbReference>
<dbReference type="KEGG" id="dosa:Os10g0483500"/>
<dbReference type="eggNOG" id="KOG1231">
    <property type="taxonomic scope" value="Eukaryota"/>
</dbReference>
<dbReference type="HOGENOM" id="CLU_024955_1_0_1"/>
<dbReference type="InParanoid" id="Q8LNV6"/>
<dbReference type="OMA" id="RNSGLWE"/>
<dbReference type="OrthoDB" id="415825at2759"/>
<dbReference type="PlantReactome" id="R-OSA-9828944">
    <property type="pathway name" value="Regulation of lemma joints development and leaf angle by cytokinin"/>
</dbReference>
<dbReference type="Proteomes" id="UP000000763">
    <property type="component" value="Chromosome 10"/>
</dbReference>
<dbReference type="Proteomes" id="UP000007752">
    <property type="component" value="Chromosome 10"/>
</dbReference>
<dbReference type="Proteomes" id="UP000007752">
    <property type="component" value="Chromosome 12"/>
</dbReference>
<dbReference type="Proteomes" id="UP000059680">
    <property type="component" value="Chromosome 10"/>
</dbReference>
<dbReference type="GO" id="GO:0005783">
    <property type="term" value="C:endoplasmic reticulum"/>
    <property type="evidence" value="ECO:0007669"/>
    <property type="project" value="UniProtKB-SubCell"/>
</dbReference>
<dbReference type="GO" id="GO:0019139">
    <property type="term" value="F:cytokinin dehydrogenase activity"/>
    <property type="evidence" value="ECO:0000305"/>
    <property type="project" value="Gramene"/>
</dbReference>
<dbReference type="GO" id="GO:0071949">
    <property type="term" value="F:FAD binding"/>
    <property type="evidence" value="ECO:0007669"/>
    <property type="project" value="InterPro"/>
</dbReference>
<dbReference type="GO" id="GO:0016491">
    <property type="term" value="F:oxidoreductase activity"/>
    <property type="evidence" value="ECO:0000318"/>
    <property type="project" value="GO_Central"/>
</dbReference>
<dbReference type="GO" id="GO:0009690">
    <property type="term" value="P:cytokinin metabolic process"/>
    <property type="evidence" value="ECO:0007669"/>
    <property type="project" value="InterPro"/>
</dbReference>
<dbReference type="Gene3D" id="3.30.465.10">
    <property type="match status" value="1"/>
</dbReference>
<dbReference type="Gene3D" id="3.40.462.10">
    <property type="entry name" value="FAD-linked oxidases, C-terminal domain"/>
    <property type="match status" value="1"/>
</dbReference>
<dbReference type="Gene3D" id="3.30.43.10">
    <property type="entry name" value="Uridine Diphospho-n-acetylenolpyruvylglucosamine Reductase, domain 2"/>
    <property type="match status" value="1"/>
</dbReference>
<dbReference type="InterPro" id="IPR016170">
    <property type="entry name" value="Cytok_DH_C_sf"/>
</dbReference>
<dbReference type="InterPro" id="IPR015345">
    <property type="entry name" value="Cytokinin_DH_FAD/cytokin-bd"/>
</dbReference>
<dbReference type="InterPro" id="IPR016166">
    <property type="entry name" value="FAD-bd_PCMH"/>
</dbReference>
<dbReference type="InterPro" id="IPR036318">
    <property type="entry name" value="FAD-bd_PCMH-like_sf"/>
</dbReference>
<dbReference type="InterPro" id="IPR016167">
    <property type="entry name" value="FAD-bd_PCMH_sub1"/>
</dbReference>
<dbReference type="InterPro" id="IPR016169">
    <property type="entry name" value="FAD-bd_PCMH_sub2"/>
</dbReference>
<dbReference type="InterPro" id="IPR016164">
    <property type="entry name" value="FAD-linked_Oxase-like_C"/>
</dbReference>
<dbReference type="InterPro" id="IPR050432">
    <property type="entry name" value="FAD-linked_Oxidoreductases_BP"/>
</dbReference>
<dbReference type="InterPro" id="IPR006094">
    <property type="entry name" value="Oxid_FAD_bind_N"/>
</dbReference>
<dbReference type="PANTHER" id="PTHR13878:SF107">
    <property type="entry name" value="CYTOKININ DEHYDROGENASE 3"/>
    <property type="match status" value="1"/>
</dbReference>
<dbReference type="PANTHER" id="PTHR13878">
    <property type="entry name" value="GULONOLACTONE OXIDASE"/>
    <property type="match status" value="1"/>
</dbReference>
<dbReference type="Pfam" id="PF09265">
    <property type="entry name" value="Cytokin-bind"/>
    <property type="match status" value="1"/>
</dbReference>
<dbReference type="Pfam" id="PF01565">
    <property type="entry name" value="FAD_binding_4"/>
    <property type="match status" value="1"/>
</dbReference>
<dbReference type="SUPFAM" id="SSF56176">
    <property type="entry name" value="FAD-binding/transporter-associated domain-like"/>
    <property type="match status" value="1"/>
</dbReference>
<dbReference type="SUPFAM" id="SSF55103">
    <property type="entry name" value="FAD-linked oxidases, C-terminal domain"/>
    <property type="match status" value="1"/>
</dbReference>
<dbReference type="PROSITE" id="PS51387">
    <property type="entry name" value="FAD_PCMH"/>
    <property type="match status" value="1"/>
</dbReference>
<feature type="signal peptide" evidence="4">
    <location>
        <begin position="1"/>
        <end position="22"/>
    </location>
</feature>
<feature type="chain" id="PRO_0000394206" description="Cytokinin dehydrogenase 3">
    <location>
        <begin position="23"/>
        <end position="527"/>
    </location>
</feature>
<feature type="domain" description="FAD-binding PCMH-type" evidence="6">
    <location>
        <begin position="52"/>
        <end position="231"/>
    </location>
</feature>
<feature type="binding site" evidence="2">
    <location>
        <position position="87"/>
    </location>
    <ligand>
        <name>FAD</name>
        <dbReference type="ChEBI" id="CHEBI:57692"/>
    </ligand>
</feature>
<feature type="binding site" evidence="3">
    <location>
        <position position="89"/>
    </location>
    <ligand>
        <name>FAD</name>
        <dbReference type="ChEBI" id="CHEBI:57692"/>
    </ligand>
</feature>
<feature type="binding site" evidence="3">
    <location>
        <position position="91"/>
    </location>
    <ligand>
        <name>FAD</name>
        <dbReference type="ChEBI" id="CHEBI:57692"/>
    </ligand>
</feature>
<feature type="binding site" evidence="3">
    <location>
        <position position="93"/>
    </location>
    <ligand>
        <name>FAD</name>
        <dbReference type="ChEBI" id="CHEBI:57692"/>
    </ligand>
</feature>
<feature type="binding site" evidence="3">
    <location>
        <position position="97"/>
    </location>
    <ligand>
        <name>FAD</name>
        <dbReference type="ChEBI" id="CHEBI:57692"/>
    </ligand>
</feature>
<feature type="binding site" evidence="3">
    <location>
        <position position="155"/>
    </location>
    <ligand>
        <name>FAD</name>
        <dbReference type="ChEBI" id="CHEBI:57692"/>
    </ligand>
</feature>
<feature type="binding site" evidence="3">
    <location>
        <position position="160"/>
    </location>
    <ligand>
        <name>FAD</name>
        <dbReference type="ChEBI" id="CHEBI:57692"/>
    </ligand>
</feature>
<feature type="binding site" evidence="3">
    <location>
        <position position="166"/>
    </location>
    <ligand>
        <name>FAD</name>
        <dbReference type="ChEBI" id="CHEBI:57692"/>
    </ligand>
</feature>
<feature type="binding site" evidence="3">
    <location>
        <position position="170"/>
    </location>
    <ligand>
        <name>FAD</name>
        <dbReference type="ChEBI" id="CHEBI:57692"/>
    </ligand>
</feature>
<feature type="binding site" evidence="3">
    <location>
        <position position="221"/>
    </location>
    <ligand>
        <name>FAD</name>
        <dbReference type="ChEBI" id="CHEBI:57692"/>
    </ligand>
</feature>
<feature type="binding site" evidence="3">
    <location>
        <position position="471"/>
    </location>
    <ligand>
        <name>FAD</name>
        <dbReference type="ChEBI" id="CHEBI:57692"/>
    </ligand>
</feature>
<feature type="binding site" evidence="3">
    <location>
        <position position="509"/>
    </location>
    <ligand>
        <name>FAD</name>
        <dbReference type="ChEBI" id="CHEBI:57692"/>
    </ligand>
</feature>
<feature type="modified residue" description="Pros-8alpha-FAD histidine" evidence="3">
    <location>
        <position position="92"/>
    </location>
</feature>
<feature type="glycosylation site" description="N-linked (GlcNAc...) asparagine" evidence="5">
    <location>
        <position position="413"/>
    </location>
</feature>
<evidence type="ECO:0000250" key="1"/>
<evidence type="ECO:0000250" key="2">
    <source>
        <dbReference type="UniProtKB" id="Q9FUJ1"/>
    </source>
</evidence>
<evidence type="ECO:0000250" key="3">
    <source>
        <dbReference type="UniProtKB" id="Q9T0N8"/>
    </source>
</evidence>
<evidence type="ECO:0000255" key="4"/>
<evidence type="ECO:0000255" key="5">
    <source>
        <dbReference type="PROSITE-ProRule" id="PRU00498"/>
    </source>
</evidence>
<evidence type="ECO:0000255" key="6">
    <source>
        <dbReference type="PROSITE-ProRule" id="PRU00718"/>
    </source>
</evidence>
<evidence type="ECO:0000269" key="7">
    <source>
    </source>
</evidence>
<evidence type="ECO:0000269" key="8">
    <source>
    </source>
</evidence>
<evidence type="ECO:0000303" key="9">
    <source>
    </source>
</evidence>
<evidence type="ECO:0000305" key="10"/>
<evidence type="ECO:0000305" key="11">
    <source>
    </source>
</evidence>
<evidence type="ECO:0000312" key="12">
    <source>
        <dbReference type="EMBL" id="AAM91887.1"/>
    </source>
</evidence>
<evidence type="ECO:0000312" key="13">
    <source>
        <dbReference type="EMBL" id="AAP54326.1"/>
    </source>
</evidence>
<evidence type="ECO:0000312" key="14">
    <source>
        <dbReference type="EMBL" id="BAT11359.1"/>
    </source>
</evidence>
<organism>
    <name type="scientific">Oryza sativa subsp. japonica</name>
    <name type="common">Rice</name>
    <dbReference type="NCBI Taxonomy" id="39947"/>
    <lineage>
        <taxon>Eukaryota</taxon>
        <taxon>Viridiplantae</taxon>
        <taxon>Streptophyta</taxon>
        <taxon>Embryophyta</taxon>
        <taxon>Tracheophyta</taxon>
        <taxon>Spermatophyta</taxon>
        <taxon>Magnoliopsida</taxon>
        <taxon>Liliopsida</taxon>
        <taxon>Poales</taxon>
        <taxon>Poaceae</taxon>
        <taxon>BOP clade</taxon>
        <taxon>Oryzoideae</taxon>
        <taxon>Oryzeae</taxon>
        <taxon>Oryzinae</taxon>
        <taxon>Oryza</taxon>
        <taxon>Oryza sativa</taxon>
    </lineage>
</organism>
<gene>
    <name evidence="9" type="primary">CKX3</name>
    <name evidence="14" type="ordered locus">Os10g0483500</name>
    <name evidence="13" type="ordered locus">LOC_Os10g34230</name>
    <name type="ORF">OsJ_31929</name>
    <name type="ORF">OsJ_35246</name>
    <name evidence="12" type="ORF">OSJNBa0012L23.33</name>
</gene>